<protein>
    <recommendedName>
        <fullName>5-hydroxytryptamine receptor 1</fullName>
    </recommendedName>
    <alternativeName>
        <fullName>5-HTB1</fullName>
    </alternativeName>
    <alternativeName>
        <fullName>Serotonin receptor 1</fullName>
    </alternativeName>
</protein>
<dbReference type="EMBL" id="L43557">
    <property type="protein sequence ID" value="AAA93101.1"/>
    <property type="molecule type" value="Genomic_DNA"/>
</dbReference>
<dbReference type="SMR" id="Q16950"/>
<dbReference type="OrthoDB" id="5957871at2759"/>
<dbReference type="Proteomes" id="UP000694888">
    <property type="component" value="Unplaced"/>
</dbReference>
<dbReference type="GO" id="GO:0005886">
    <property type="term" value="C:plasma membrane"/>
    <property type="evidence" value="ECO:0007669"/>
    <property type="project" value="UniProtKB-SubCell"/>
</dbReference>
<dbReference type="GO" id="GO:0004930">
    <property type="term" value="F:G protein-coupled receptor activity"/>
    <property type="evidence" value="ECO:0007669"/>
    <property type="project" value="UniProtKB-KW"/>
</dbReference>
<dbReference type="GO" id="GO:0071880">
    <property type="term" value="P:adenylate cyclase-activating adrenergic receptor signaling pathway"/>
    <property type="evidence" value="ECO:0007669"/>
    <property type="project" value="TreeGrafter"/>
</dbReference>
<dbReference type="GO" id="GO:0043410">
    <property type="term" value="P:positive regulation of MAPK cascade"/>
    <property type="evidence" value="ECO:0007669"/>
    <property type="project" value="TreeGrafter"/>
</dbReference>
<dbReference type="CDD" id="cd15065">
    <property type="entry name" value="7tmA_Ap5-HTB1-like"/>
    <property type="match status" value="1"/>
</dbReference>
<dbReference type="Gene3D" id="1.20.1070.10">
    <property type="entry name" value="Rhodopsin 7-helix transmembrane proteins"/>
    <property type="match status" value="1"/>
</dbReference>
<dbReference type="InterPro" id="IPR000276">
    <property type="entry name" value="GPCR_Rhodpsn"/>
</dbReference>
<dbReference type="InterPro" id="IPR017452">
    <property type="entry name" value="GPCR_Rhodpsn_7TM"/>
</dbReference>
<dbReference type="PANTHER" id="PTHR24248">
    <property type="entry name" value="ADRENERGIC RECEPTOR-RELATED G-PROTEIN COUPLED RECEPTOR"/>
    <property type="match status" value="1"/>
</dbReference>
<dbReference type="PANTHER" id="PTHR24248:SF66">
    <property type="entry name" value="OCTOPAMINE RECEPTOR BETA-3R"/>
    <property type="match status" value="1"/>
</dbReference>
<dbReference type="Pfam" id="PF00001">
    <property type="entry name" value="7tm_1"/>
    <property type="match status" value="2"/>
</dbReference>
<dbReference type="PRINTS" id="PR00237">
    <property type="entry name" value="GPCRRHODOPSN"/>
</dbReference>
<dbReference type="SMART" id="SM01381">
    <property type="entry name" value="7TM_GPCR_Srsx"/>
    <property type="match status" value="1"/>
</dbReference>
<dbReference type="SUPFAM" id="SSF81321">
    <property type="entry name" value="Family A G protein-coupled receptor-like"/>
    <property type="match status" value="1"/>
</dbReference>
<dbReference type="PROSITE" id="PS50262">
    <property type="entry name" value="G_PROTEIN_RECEP_F1_2"/>
    <property type="match status" value="1"/>
</dbReference>
<gene>
    <name type="primary">5HTB1</name>
</gene>
<accession>Q16950</accession>
<proteinExistence type="evidence at transcript level"/>
<reference key="1">
    <citation type="journal article" date="1995" name="J. Neurosci.">
        <title>Cloning and characterization of two related serotonergic receptors from the brain and the reproductive system of Aplysia that activate phospholipase C.</title>
        <authorList>
            <person name="Li X.C."/>
            <person name="Giot J.F."/>
            <person name="Kuhl D."/>
            <person name="Hen R."/>
            <person name="Kandel E.R."/>
        </authorList>
    </citation>
    <scope>NUCLEOTIDE SEQUENCE [GENOMIC DNA]</scope>
</reference>
<feature type="chain" id="PRO_0000068983" description="5-hydroxytryptamine receptor 1">
    <location>
        <begin position="1"/>
        <end position="453"/>
    </location>
</feature>
<feature type="topological domain" description="Extracellular" evidence="1">
    <location>
        <begin position="1"/>
        <end position="36"/>
    </location>
</feature>
<feature type="transmembrane region" description="Helical; Name=1" evidence="1">
    <location>
        <begin position="37"/>
        <end position="57"/>
    </location>
</feature>
<feature type="topological domain" description="Cytoplasmic" evidence="1">
    <location>
        <begin position="58"/>
        <end position="74"/>
    </location>
</feature>
<feature type="transmembrane region" description="Helical; Name=2" evidence="1">
    <location>
        <begin position="75"/>
        <end position="94"/>
    </location>
</feature>
<feature type="topological domain" description="Extracellular" evidence="1">
    <location>
        <begin position="95"/>
        <end position="110"/>
    </location>
</feature>
<feature type="transmembrane region" description="Helical; Name=3" evidence="1">
    <location>
        <begin position="111"/>
        <end position="133"/>
    </location>
</feature>
<feature type="topological domain" description="Cytoplasmic" evidence="1">
    <location>
        <begin position="134"/>
        <end position="153"/>
    </location>
</feature>
<feature type="transmembrane region" description="Helical; Name=4" evidence="1">
    <location>
        <begin position="154"/>
        <end position="175"/>
    </location>
</feature>
<feature type="topological domain" description="Extracellular" evidence="1">
    <location>
        <begin position="176"/>
        <end position="223"/>
    </location>
</feature>
<feature type="transmembrane region" description="Helical; Name=5" evidence="1">
    <location>
        <begin position="224"/>
        <end position="244"/>
    </location>
</feature>
<feature type="topological domain" description="Cytoplasmic" evidence="1">
    <location>
        <begin position="245"/>
        <end position="301"/>
    </location>
</feature>
<feature type="transmembrane region" description="Helical; Name=6" evidence="1">
    <location>
        <begin position="302"/>
        <end position="322"/>
    </location>
</feature>
<feature type="topological domain" description="Extracellular" evidence="1">
    <location>
        <begin position="323"/>
        <end position="331"/>
    </location>
</feature>
<feature type="transmembrane region" description="Helical; Name=7" evidence="1">
    <location>
        <begin position="332"/>
        <end position="352"/>
    </location>
</feature>
<feature type="topological domain" description="Cytoplasmic" evidence="1">
    <location>
        <begin position="353"/>
        <end position="453"/>
    </location>
</feature>
<feature type="region of interest" description="Disordered" evidence="3">
    <location>
        <begin position="397"/>
        <end position="428"/>
    </location>
</feature>
<feature type="compositionally biased region" description="Basic and acidic residues" evidence="3">
    <location>
        <begin position="403"/>
        <end position="412"/>
    </location>
</feature>
<feature type="disulfide bond" evidence="2">
    <location>
        <begin position="110"/>
        <end position="225"/>
    </location>
</feature>
<sequence length="453" mass="50622">MKSLKSSTHDVPHPEHVVWAPPAYDEQHHLFFSHGTVLIGIVGSLIITVAVVGNVLVCLAIFTEPILSHSKSNFFIVSLAVADLLLALLVMTFALVNDMYGYWLFGETFCFIWMSADVMCETASIFSICVISYDRLKQVQKPLHYEEFMTTTRALLIIACLWICSFVLSFVPIFLEWHELSVEEIKAIFKDNKTEKEKALEAHNFSSALNQTLGDNQKSNAKHVCLFDVHFTYSVIYSFICFYVPCTLMLTNYLRLFLIAQTHQVRIRSLQMTNPPQLRGQGASSYRNQGTQGSKAARTLTIITGTFLACWLPFFIINPIAAADEHLIPLECFMVTIWLGYFNSSVNPIIYGTSNSKFRAAFKRLLRCRSVKSVVGSISPVSPAYRAFSWIRPSRLDLSSSEHPSDACDTGRGKNSKGGDCATADPTKPDVSVSEEIIYAGTKVFDSDTAFSS</sequence>
<organism>
    <name type="scientific">Aplysia californica</name>
    <name type="common">California sea hare</name>
    <dbReference type="NCBI Taxonomy" id="6500"/>
    <lineage>
        <taxon>Eukaryota</taxon>
        <taxon>Metazoa</taxon>
        <taxon>Spiralia</taxon>
        <taxon>Lophotrochozoa</taxon>
        <taxon>Mollusca</taxon>
        <taxon>Gastropoda</taxon>
        <taxon>Heterobranchia</taxon>
        <taxon>Euthyneura</taxon>
        <taxon>Tectipleura</taxon>
        <taxon>Aplysiida</taxon>
        <taxon>Aplysioidea</taxon>
        <taxon>Aplysiidae</taxon>
        <taxon>Aplysia</taxon>
    </lineage>
</organism>
<evidence type="ECO:0000250" key="1"/>
<evidence type="ECO:0000255" key="2">
    <source>
        <dbReference type="PROSITE-ProRule" id="PRU00521"/>
    </source>
</evidence>
<evidence type="ECO:0000256" key="3">
    <source>
        <dbReference type="SAM" id="MobiDB-lite"/>
    </source>
</evidence>
<comment type="function">
    <text>This is one of the several different receptors for 5-hydroxytryptamine (serotonin). 5-HT plays important roles in various behavioral and physiological processes in aplysia. These include feeding, locomotion, circadian rhythm, learning and memory, synaptic plasticity, and synaptic growth. This receptor is mediated by G proteins that stimulate phospholipase C.</text>
</comment>
<comment type="subcellular location">
    <subcellularLocation>
        <location>Cell membrane</location>
        <topology>Multi-pass membrane protein</topology>
    </subcellularLocation>
</comment>
<comment type="tissue specificity">
    <text>Reproductive system.</text>
</comment>
<comment type="similarity">
    <text evidence="2">Belongs to the G-protein coupled receptor 1 family.</text>
</comment>
<keyword id="KW-1003">Cell membrane</keyword>
<keyword id="KW-1015">Disulfide bond</keyword>
<keyword id="KW-0297">G-protein coupled receptor</keyword>
<keyword id="KW-0472">Membrane</keyword>
<keyword id="KW-0675">Receptor</keyword>
<keyword id="KW-0807">Transducer</keyword>
<keyword id="KW-0812">Transmembrane</keyword>
<keyword id="KW-1133">Transmembrane helix</keyword>
<name>5HTB1_APLCA</name>